<evidence type="ECO:0000250" key="1"/>
<evidence type="ECO:0000250" key="2">
    <source>
        <dbReference type="UniProtKB" id="Q16795"/>
    </source>
</evidence>
<evidence type="ECO:0000250" key="3">
    <source>
        <dbReference type="UniProtKB" id="Q5BK63"/>
    </source>
</evidence>
<evidence type="ECO:0000269" key="4">
    <source>
    </source>
</evidence>
<evidence type="ECO:0000269" key="5">
    <source>
    </source>
</evidence>
<evidence type="ECO:0000305" key="6"/>
<evidence type="ECO:0007744" key="7">
    <source>
        <dbReference type="PDB" id="8PW5"/>
    </source>
</evidence>
<evidence type="ECO:0007744" key="8">
    <source>
    </source>
</evidence>
<evidence type="ECO:0007744" key="9">
    <source>
    </source>
</evidence>
<evidence type="ECO:0007829" key="10">
    <source>
        <dbReference type="PDB" id="8IC3"/>
    </source>
</evidence>
<evidence type="ECO:0007829" key="11">
    <source>
        <dbReference type="PDB" id="8OM1"/>
    </source>
</evidence>
<evidence type="ECO:0007829" key="12">
    <source>
        <dbReference type="PDB" id="8RGR"/>
    </source>
</evidence>
<evidence type="ECO:0007829" key="13">
    <source>
        <dbReference type="PDB" id="8RGT"/>
    </source>
</evidence>
<evidence type="ECO:0007829" key="14">
    <source>
        <dbReference type="PDB" id="8XNL"/>
    </source>
</evidence>
<organism>
    <name type="scientific">Mus musculus</name>
    <name type="common">Mouse</name>
    <dbReference type="NCBI Taxonomy" id="10090"/>
    <lineage>
        <taxon>Eukaryota</taxon>
        <taxon>Metazoa</taxon>
        <taxon>Chordata</taxon>
        <taxon>Craniata</taxon>
        <taxon>Vertebrata</taxon>
        <taxon>Euteleostomi</taxon>
        <taxon>Mammalia</taxon>
        <taxon>Eutheria</taxon>
        <taxon>Euarchontoglires</taxon>
        <taxon>Glires</taxon>
        <taxon>Rodentia</taxon>
        <taxon>Myomorpha</taxon>
        <taxon>Muroidea</taxon>
        <taxon>Muridae</taxon>
        <taxon>Murinae</taxon>
        <taxon>Mus</taxon>
        <taxon>Mus</taxon>
    </lineage>
</organism>
<feature type="transit peptide" description="Mitochondrion" evidence="1">
    <location>
        <begin position="1"/>
        <end position="35"/>
    </location>
</feature>
<feature type="chain" id="PRO_0000019993" description="NADH dehydrogenase [ubiquinone] 1 alpha subcomplex subunit 9, mitochondrial">
    <location>
        <begin position="36"/>
        <end position="377"/>
    </location>
</feature>
<feature type="modified residue" description="N6-succinyllysine" evidence="9">
    <location>
        <position position="175"/>
    </location>
</feature>
<feature type="modified residue" description="N6-acetyllysine" evidence="8">
    <location>
        <position position="189"/>
    </location>
</feature>
<feature type="modified residue" description="N6-acetyllysine" evidence="8">
    <location>
        <position position="370"/>
    </location>
</feature>
<feature type="sequence conflict" description="In Ref. 1; BAB22596." evidence="6" ref="1">
    <original>L</original>
    <variation>P</variation>
    <location>
        <position position="100"/>
    </location>
</feature>
<feature type="helix" evidence="11">
    <location>
        <begin position="38"/>
        <end position="40"/>
    </location>
</feature>
<feature type="strand" evidence="11">
    <location>
        <begin position="43"/>
        <end position="47"/>
    </location>
</feature>
<feature type="strand" evidence="11">
    <location>
        <begin position="55"/>
        <end position="59"/>
    </location>
</feature>
<feature type="turn" evidence="11">
    <location>
        <begin position="60"/>
        <end position="62"/>
    </location>
</feature>
<feature type="helix" evidence="11">
    <location>
        <begin position="64"/>
        <end position="74"/>
    </location>
</feature>
<feature type="turn" evidence="11">
    <location>
        <begin position="75"/>
        <end position="77"/>
    </location>
</feature>
<feature type="strand" evidence="11">
    <location>
        <begin position="79"/>
        <end position="84"/>
    </location>
</feature>
<feature type="helix" evidence="11">
    <location>
        <begin position="88"/>
        <end position="97"/>
    </location>
</feature>
<feature type="strand" evidence="11">
    <location>
        <begin position="102"/>
        <end position="107"/>
    </location>
</feature>
<feature type="helix" evidence="11">
    <location>
        <begin position="113"/>
        <end position="120"/>
    </location>
</feature>
<feature type="strand" evidence="11">
    <location>
        <begin position="124"/>
        <end position="128"/>
    </location>
</feature>
<feature type="helix" evidence="11">
    <location>
        <begin position="141"/>
        <end position="145"/>
    </location>
</feature>
<feature type="helix" evidence="11">
    <location>
        <begin position="147"/>
        <end position="159"/>
    </location>
</feature>
<feature type="strand" evidence="11">
    <location>
        <begin position="162"/>
        <end position="167"/>
    </location>
</feature>
<feature type="strand" evidence="13">
    <location>
        <begin position="173"/>
        <end position="175"/>
    </location>
</feature>
<feature type="helix" evidence="11">
    <location>
        <begin position="179"/>
        <end position="194"/>
    </location>
</feature>
<feature type="strand" evidence="14">
    <location>
        <begin position="195"/>
        <end position="197"/>
    </location>
</feature>
<feature type="strand" evidence="11">
    <location>
        <begin position="199"/>
        <end position="203"/>
    </location>
</feature>
<feature type="strand" evidence="11">
    <location>
        <begin position="206"/>
        <end position="208"/>
    </location>
</feature>
<feature type="helix" evidence="11">
    <location>
        <begin position="214"/>
        <end position="218"/>
    </location>
</feature>
<feature type="helix" evidence="11">
    <location>
        <begin position="219"/>
        <end position="223"/>
    </location>
</feature>
<feature type="strand" evidence="11">
    <location>
        <begin position="224"/>
        <end position="228"/>
    </location>
</feature>
<feature type="helix" evidence="11">
    <location>
        <begin position="229"/>
        <end position="232"/>
    </location>
</feature>
<feature type="strand" evidence="10">
    <location>
        <begin position="239"/>
        <end position="241"/>
    </location>
</feature>
<feature type="helix" evidence="11">
    <location>
        <begin position="242"/>
        <end position="251"/>
    </location>
</feature>
<feature type="turn" evidence="11">
    <location>
        <begin position="252"/>
        <end position="254"/>
    </location>
</feature>
<feature type="helix" evidence="11">
    <location>
        <begin position="256"/>
        <end position="258"/>
    </location>
</feature>
<feature type="strand" evidence="11">
    <location>
        <begin position="262"/>
        <end position="265"/>
    </location>
</feature>
<feature type="strand" evidence="11">
    <location>
        <begin position="270"/>
        <end position="272"/>
    </location>
</feature>
<feature type="helix" evidence="11">
    <location>
        <begin position="273"/>
        <end position="284"/>
    </location>
</feature>
<feature type="strand" evidence="11">
    <location>
        <begin position="290"/>
        <end position="292"/>
    </location>
</feature>
<feature type="helix" evidence="11">
    <location>
        <begin position="295"/>
        <end position="305"/>
    </location>
</feature>
<feature type="strand" evidence="11">
    <location>
        <begin position="309"/>
        <end position="311"/>
    </location>
</feature>
<feature type="helix" evidence="11">
    <location>
        <begin position="316"/>
        <end position="322"/>
    </location>
</feature>
<feature type="strand" evidence="12">
    <location>
        <begin position="330"/>
        <end position="332"/>
    </location>
</feature>
<feature type="helix" evidence="11">
    <location>
        <begin position="336"/>
        <end position="338"/>
    </location>
</feature>
<feature type="helix" evidence="11">
    <location>
        <begin position="345"/>
        <end position="353"/>
    </location>
</feature>
<feature type="helix" evidence="11">
    <location>
        <begin position="354"/>
        <end position="356"/>
    </location>
</feature>
<feature type="helix" evidence="11">
    <location>
        <begin position="359"/>
        <end position="361"/>
    </location>
</feature>
<feature type="helix" evidence="11">
    <location>
        <begin position="366"/>
        <end position="368"/>
    </location>
</feature>
<comment type="function">
    <text evidence="5">Accessory subunit of the mitochondrial membrane respiratory chain NADH dehydrogenase (Complex I), that is believed not to be involved in catalysis. Complex I functions in the transfer of electrons from NADH to the respiratory chain. The immediate electron acceptor for the enzyme is believed to be ubiquinone.</text>
</comment>
<comment type="cofactor">
    <cofactor evidence="1">
        <name>FAD</name>
        <dbReference type="ChEBI" id="CHEBI:57692"/>
    </cofactor>
    <text evidence="1">Binds 1 FAD per subunit.</text>
</comment>
<comment type="subunit">
    <text evidence="2 3 4 5">Complex I is composed of 45 different subunits (PubMed:38575788). This a component of the hydrophobic protein fraction (By similarity). Interacts with BLOC1S1 (By similarity). Interacts with SLC2A4 (By similarity). Interacts with CLOCK (By similarity). Interacts with RAB5IF (PubMed:31536960).</text>
</comment>
<comment type="subcellular location">
    <subcellularLocation>
        <location evidence="5">Mitochondrion matrix</location>
    </subcellularLocation>
</comment>
<comment type="PTM">
    <text evidence="2">Acetylated on lysine residues. BLOC1S1 is required for acetylation. Acetylated by CLOCK in a circadian manner.</text>
</comment>
<comment type="similarity">
    <text evidence="6">Belongs to the complex I NDUFA9 subunit family.</text>
</comment>
<protein>
    <recommendedName>
        <fullName>NADH dehydrogenase [ubiquinone] 1 alpha subcomplex subunit 9, mitochondrial</fullName>
    </recommendedName>
    <alternativeName>
        <fullName>Complex I-39kD</fullName>
        <shortName>CI-39kD</shortName>
    </alternativeName>
    <alternativeName>
        <fullName>NADH-ubiquinone oxidoreductase 39 kDa subunit</fullName>
    </alternativeName>
</protein>
<proteinExistence type="evidence at protein level"/>
<dbReference type="EMBL" id="AK003137">
    <property type="protein sequence ID" value="BAB22596.1"/>
    <property type="molecule type" value="mRNA"/>
</dbReference>
<dbReference type="EMBL" id="CH466523">
    <property type="protein sequence ID" value="EDK99844.1"/>
    <property type="molecule type" value="Genomic_DNA"/>
</dbReference>
<dbReference type="EMBL" id="BC005760">
    <property type="protein sequence ID" value="AAH05760.1"/>
    <property type="molecule type" value="mRNA"/>
</dbReference>
<dbReference type="EMBL" id="BC058378">
    <property type="protein sequence ID" value="AAH58378.1"/>
    <property type="molecule type" value="mRNA"/>
</dbReference>
<dbReference type="CCDS" id="CCDS20557.1"/>
<dbReference type="RefSeq" id="NP_079634.2">
    <property type="nucleotide sequence ID" value="NM_025358.3"/>
</dbReference>
<dbReference type="PDB" id="6G2J">
    <property type="method" value="EM"/>
    <property type="resolution" value="3.30 A"/>
    <property type="chains" value="P=1-377"/>
</dbReference>
<dbReference type="PDB" id="6G72">
    <property type="method" value="EM"/>
    <property type="resolution" value="3.90 A"/>
    <property type="chains" value="P=1-377"/>
</dbReference>
<dbReference type="PDB" id="6ZR2">
    <property type="method" value="EM"/>
    <property type="resolution" value="3.10 A"/>
    <property type="chains" value="P=1-377"/>
</dbReference>
<dbReference type="PDB" id="6ZTQ">
    <property type="method" value="EM"/>
    <property type="resolution" value="3.00 A"/>
    <property type="chains" value="P=1-377"/>
</dbReference>
<dbReference type="PDB" id="7AK5">
    <property type="method" value="EM"/>
    <property type="resolution" value="3.17 A"/>
    <property type="chains" value="P=1-377"/>
</dbReference>
<dbReference type="PDB" id="7AK6">
    <property type="method" value="EM"/>
    <property type="resolution" value="3.82 A"/>
    <property type="chains" value="P=1-377"/>
</dbReference>
<dbReference type="PDB" id="7B93">
    <property type="method" value="EM"/>
    <property type="resolution" value="3.04 A"/>
    <property type="chains" value="P=1-377"/>
</dbReference>
<dbReference type="PDB" id="7PSA">
    <property type="method" value="EM"/>
    <property type="resolution" value="3.40 A"/>
    <property type="chains" value="P=1-377"/>
</dbReference>
<dbReference type="PDB" id="8C2S">
    <property type="method" value="EM"/>
    <property type="resolution" value="3.90 A"/>
    <property type="chains" value="P=1-377"/>
</dbReference>
<dbReference type="PDB" id="8CA3">
    <property type="method" value="EM"/>
    <property type="resolution" value="3.20 A"/>
    <property type="chains" value="P=1-377"/>
</dbReference>
<dbReference type="PDB" id="8CA5">
    <property type="method" value="EM"/>
    <property type="resolution" value="3.90 A"/>
    <property type="chains" value="P=1-377"/>
</dbReference>
<dbReference type="PDB" id="8IAO">
    <property type="method" value="EM"/>
    <property type="resolution" value="4.20 A"/>
    <property type="chains" value="P=1-377"/>
</dbReference>
<dbReference type="PDB" id="8IAP">
    <property type="method" value="EM"/>
    <property type="resolution" value="3.20 A"/>
    <property type="chains" value="P=1-377"/>
</dbReference>
<dbReference type="PDB" id="8IB4">
    <property type="method" value="EM"/>
    <property type="resolution" value="4.30 A"/>
    <property type="chains" value="P=1-377"/>
</dbReference>
<dbReference type="PDB" id="8IB5">
    <property type="method" value="EM"/>
    <property type="resolution" value="3.30 A"/>
    <property type="chains" value="P=1-377"/>
</dbReference>
<dbReference type="PDB" id="8IB9">
    <property type="method" value="EM"/>
    <property type="resolution" value="4.30 A"/>
    <property type="chains" value="P=1-377"/>
</dbReference>
<dbReference type="PDB" id="8IBA">
    <property type="method" value="EM"/>
    <property type="resolution" value="3.20 A"/>
    <property type="chains" value="P=1-377"/>
</dbReference>
<dbReference type="PDB" id="8IBD">
    <property type="method" value="EM"/>
    <property type="resolution" value="4.20 A"/>
    <property type="chains" value="P=1-377"/>
</dbReference>
<dbReference type="PDB" id="8IBE">
    <property type="method" value="EM"/>
    <property type="resolution" value="3.30 A"/>
    <property type="chains" value="P=1-377"/>
</dbReference>
<dbReference type="PDB" id="8IC2">
    <property type="method" value="EM"/>
    <property type="resolution" value="6.30 A"/>
    <property type="chains" value="P=1-377"/>
</dbReference>
<dbReference type="PDB" id="8IC3">
    <property type="method" value="EM"/>
    <property type="resolution" value="3.20 A"/>
    <property type="chains" value="P=1-377"/>
</dbReference>
<dbReference type="PDB" id="8OLT">
    <property type="method" value="EM"/>
    <property type="resolution" value="2.84 A"/>
    <property type="chains" value="P=1-377"/>
</dbReference>
<dbReference type="PDB" id="8OM1">
    <property type="method" value="EM"/>
    <property type="resolution" value="2.39 A"/>
    <property type="chains" value="P=1-377"/>
</dbReference>
<dbReference type="PDB" id="8PW5">
    <property type="method" value="EM"/>
    <property type="resolution" value="3.60 A"/>
    <property type="chains" value="P1=1-377"/>
</dbReference>
<dbReference type="PDB" id="8PW6">
    <property type="method" value="EM"/>
    <property type="resolution" value="3.30 A"/>
    <property type="chains" value="P1=1-377"/>
</dbReference>
<dbReference type="PDB" id="8PW7">
    <property type="method" value="EM"/>
    <property type="resolution" value="3.50 A"/>
    <property type="chains" value="P1=1-377"/>
</dbReference>
<dbReference type="PDB" id="8RGP">
    <property type="method" value="EM"/>
    <property type="resolution" value="3.00 A"/>
    <property type="chains" value="P=1-377"/>
</dbReference>
<dbReference type="PDB" id="8RGQ">
    <property type="method" value="EM"/>
    <property type="resolution" value="3.00 A"/>
    <property type="chains" value="P=1-377"/>
</dbReference>
<dbReference type="PDB" id="8RGR">
    <property type="method" value="EM"/>
    <property type="resolution" value="2.90 A"/>
    <property type="chains" value="P=1-377"/>
</dbReference>
<dbReference type="PDB" id="8RGT">
    <property type="method" value="EM"/>
    <property type="resolution" value="3.10 A"/>
    <property type="chains" value="P=1-377"/>
</dbReference>
<dbReference type="PDB" id="8UCA">
    <property type="method" value="EM"/>
    <property type="resolution" value="3.70 A"/>
    <property type="chains" value="A9/a9=1-377"/>
</dbReference>
<dbReference type="PDB" id="8XNL">
    <property type="method" value="EM"/>
    <property type="resolution" value="3.10 A"/>
    <property type="chains" value="P=1-377"/>
</dbReference>
<dbReference type="PDB" id="8XNM">
    <property type="method" value="EM"/>
    <property type="resolution" value="3.50 A"/>
    <property type="chains" value="P=1-377"/>
</dbReference>
<dbReference type="PDB" id="8XNN">
    <property type="method" value="EM"/>
    <property type="resolution" value="3.60 A"/>
    <property type="chains" value="P=1-377"/>
</dbReference>
<dbReference type="PDB" id="8XNO">
    <property type="method" value="EM"/>
    <property type="resolution" value="3.40 A"/>
    <property type="chains" value="P=1-377"/>
</dbReference>
<dbReference type="PDB" id="8XNP">
    <property type="method" value="EM"/>
    <property type="resolution" value="3.50 A"/>
    <property type="chains" value="P=1-377"/>
</dbReference>
<dbReference type="PDB" id="8XNQ">
    <property type="method" value="EM"/>
    <property type="resolution" value="3.70 A"/>
    <property type="chains" value="P=1-377"/>
</dbReference>
<dbReference type="PDB" id="8XNR">
    <property type="method" value="EM"/>
    <property type="resolution" value="3.30 A"/>
    <property type="chains" value="P=1-377"/>
</dbReference>
<dbReference type="PDB" id="8XNS">
    <property type="method" value="EM"/>
    <property type="resolution" value="3.50 A"/>
    <property type="chains" value="P=1-377"/>
</dbReference>
<dbReference type="PDB" id="8XNT">
    <property type="method" value="EM"/>
    <property type="resolution" value="4.10 A"/>
    <property type="chains" value="P=1-377"/>
</dbReference>
<dbReference type="PDB" id="8XNU">
    <property type="method" value="EM"/>
    <property type="resolution" value="3.60 A"/>
    <property type="chains" value="P=1-377"/>
</dbReference>
<dbReference type="PDB" id="8XNV">
    <property type="method" value="EM"/>
    <property type="resolution" value="3.30 A"/>
    <property type="chains" value="P=1-377"/>
</dbReference>
<dbReference type="PDB" id="8XNW">
    <property type="method" value="EM"/>
    <property type="resolution" value="3.60 A"/>
    <property type="chains" value="P=1-377"/>
</dbReference>
<dbReference type="PDB" id="8XNX">
    <property type="method" value="EM"/>
    <property type="resolution" value="3.50 A"/>
    <property type="chains" value="P=1-377"/>
</dbReference>
<dbReference type="PDB" id="8XNY">
    <property type="method" value="EM"/>
    <property type="resolution" value="4.10 A"/>
    <property type="chains" value="P=1-377"/>
</dbReference>
<dbReference type="PDB" id="8XNZ">
    <property type="method" value="EM"/>
    <property type="resolution" value="3.30 A"/>
    <property type="chains" value="P=1-377"/>
</dbReference>
<dbReference type="PDB" id="8XO0">
    <property type="method" value="EM"/>
    <property type="resolution" value="4.20 A"/>
    <property type="chains" value="P=1-377"/>
</dbReference>
<dbReference type="PDBsum" id="6G2J"/>
<dbReference type="PDBsum" id="6G72"/>
<dbReference type="PDBsum" id="6ZR2"/>
<dbReference type="PDBsum" id="6ZTQ"/>
<dbReference type="PDBsum" id="7AK5"/>
<dbReference type="PDBsum" id="7AK6"/>
<dbReference type="PDBsum" id="7B93"/>
<dbReference type="PDBsum" id="7PSA"/>
<dbReference type="PDBsum" id="8C2S"/>
<dbReference type="PDBsum" id="8CA3"/>
<dbReference type="PDBsum" id="8CA5"/>
<dbReference type="PDBsum" id="8IAO"/>
<dbReference type="PDBsum" id="8IAP"/>
<dbReference type="PDBsum" id="8IB4"/>
<dbReference type="PDBsum" id="8IB5"/>
<dbReference type="PDBsum" id="8IB9"/>
<dbReference type="PDBsum" id="8IBA"/>
<dbReference type="PDBsum" id="8IBD"/>
<dbReference type="PDBsum" id="8IBE"/>
<dbReference type="PDBsum" id="8IC2"/>
<dbReference type="PDBsum" id="8IC3"/>
<dbReference type="PDBsum" id="8OLT"/>
<dbReference type="PDBsum" id="8OM1"/>
<dbReference type="PDBsum" id="8PW5"/>
<dbReference type="PDBsum" id="8PW6"/>
<dbReference type="PDBsum" id="8PW7"/>
<dbReference type="PDBsum" id="8RGP"/>
<dbReference type="PDBsum" id="8RGQ"/>
<dbReference type="PDBsum" id="8RGR"/>
<dbReference type="PDBsum" id="8RGT"/>
<dbReference type="PDBsum" id="8UCA"/>
<dbReference type="PDBsum" id="8XNL"/>
<dbReference type="PDBsum" id="8XNM"/>
<dbReference type="PDBsum" id="8XNN"/>
<dbReference type="PDBsum" id="8XNO"/>
<dbReference type="PDBsum" id="8XNP"/>
<dbReference type="PDBsum" id="8XNQ"/>
<dbReference type="PDBsum" id="8XNR"/>
<dbReference type="PDBsum" id="8XNS"/>
<dbReference type="PDBsum" id="8XNT"/>
<dbReference type="PDBsum" id="8XNU"/>
<dbReference type="PDBsum" id="8XNV"/>
<dbReference type="PDBsum" id="8XNW"/>
<dbReference type="PDBsum" id="8XNX"/>
<dbReference type="PDBsum" id="8XNY"/>
<dbReference type="PDBsum" id="8XNZ"/>
<dbReference type="PDBsum" id="8XO0"/>
<dbReference type="EMDB" id="EMD-11377"/>
<dbReference type="EMDB" id="EMD-11424"/>
<dbReference type="EMDB" id="EMD-11810"/>
<dbReference type="EMDB" id="EMD-11811"/>
<dbReference type="EMDB" id="EMD-12095"/>
<dbReference type="EMDB" id="EMD-13611"/>
<dbReference type="EMDB" id="EMD-16398"/>
<dbReference type="EMDB" id="EMD-16516"/>
<dbReference type="EMDB" id="EMD-16518"/>
<dbReference type="EMDB" id="EMD-16962"/>
<dbReference type="EMDB" id="EMD-16965"/>
<dbReference type="EMDB" id="EMD-17989"/>
<dbReference type="EMDB" id="EMD-17990"/>
<dbReference type="EMDB" id="EMD-17991"/>
<dbReference type="EMDB" id="EMD-19145"/>
<dbReference type="EMDB" id="EMD-19146"/>
<dbReference type="EMDB" id="EMD-19147"/>
<dbReference type="EMDB" id="EMD-19148"/>
<dbReference type="EMDB" id="EMD-35313"/>
<dbReference type="EMDB" id="EMD-35314"/>
<dbReference type="EMDB" id="EMD-35331"/>
<dbReference type="EMDB" id="EMD-35332"/>
<dbReference type="EMDB" id="EMD-35336"/>
<dbReference type="EMDB" id="EMD-35337"/>
<dbReference type="EMDB" id="EMD-35340"/>
<dbReference type="EMDB" id="EMD-35341"/>
<dbReference type="EMDB" id="EMD-35352"/>
<dbReference type="EMDB" id="EMD-35353"/>
<dbReference type="EMDB" id="EMD-38506"/>
<dbReference type="EMDB" id="EMD-38507"/>
<dbReference type="EMDB" id="EMD-38508"/>
<dbReference type="EMDB" id="EMD-38509"/>
<dbReference type="EMDB" id="EMD-38510"/>
<dbReference type="EMDB" id="EMD-38511"/>
<dbReference type="EMDB" id="EMD-38512"/>
<dbReference type="EMDB" id="EMD-38513"/>
<dbReference type="EMDB" id="EMD-38514"/>
<dbReference type="EMDB" id="EMD-38515"/>
<dbReference type="EMDB" id="EMD-38516"/>
<dbReference type="EMDB" id="EMD-38517"/>
<dbReference type="EMDB" id="EMD-38518"/>
<dbReference type="EMDB" id="EMD-38519"/>
<dbReference type="EMDB" id="EMD-38520"/>
<dbReference type="EMDB" id="EMD-38521"/>
<dbReference type="EMDB" id="EMD-42122"/>
<dbReference type="EMDB" id="EMD-4345"/>
<dbReference type="EMDB" id="EMD-4356"/>
<dbReference type="SMR" id="Q9DC69"/>
<dbReference type="BioGRID" id="211219">
    <property type="interactions" value="48"/>
</dbReference>
<dbReference type="ComplexPortal" id="CPX-266">
    <property type="entry name" value="Mitochondrial respiratory chain complex I"/>
</dbReference>
<dbReference type="CORUM" id="Q9DC69"/>
<dbReference type="FunCoup" id="Q9DC69">
    <property type="interactions" value="2689"/>
</dbReference>
<dbReference type="IntAct" id="Q9DC69">
    <property type="interactions" value="9"/>
</dbReference>
<dbReference type="MINT" id="Q9DC69"/>
<dbReference type="STRING" id="10090.ENSMUSP00000144904"/>
<dbReference type="GlyGen" id="Q9DC69">
    <property type="glycosylation" value="4 sites, 1 N-linked glycan (1 site), 1 O-linked glycan (2 sites)"/>
</dbReference>
<dbReference type="iPTMnet" id="Q9DC69"/>
<dbReference type="PhosphoSitePlus" id="Q9DC69"/>
<dbReference type="SwissPalm" id="Q9DC69"/>
<dbReference type="jPOST" id="Q9DC69"/>
<dbReference type="PaxDb" id="10090-ENSMUSP00000085523"/>
<dbReference type="PeptideAtlas" id="Q9DC69"/>
<dbReference type="ProteomicsDB" id="253045"/>
<dbReference type="Pumba" id="Q9DC69"/>
<dbReference type="TopDownProteomics" id="Q9DC69"/>
<dbReference type="Antibodypedia" id="22301">
    <property type="antibodies" value="258 antibodies from 30 providers"/>
</dbReference>
<dbReference type="DNASU" id="66108"/>
<dbReference type="Ensembl" id="ENSMUST00000205002.3">
    <property type="protein sequence ID" value="ENSMUSP00000144904.2"/>
    <property type="gene ID" value="ENSMUSG00000000399.11"/>
</dbReference>
<dbReference type="GeneID" id="66108"/>
<dbReference type="KEGG" id="mmu:66108"/>
<dbReference type="UCSC" id="uc009dve.2">
    <property type="organism name" value="mouse"/>
</dbReference>
<dbReference type="AGR" id="MGI:1913358"/>
<dbReference type="CTD" id="4704"/>
<dbReference type="MGI" id="MGI:1913358">
    <property type="gene designation" value="Ndufa9"/>
</dbReference>
<dbReference type="VEuPathDB" id="HostDB:ENSMUSG00000000399"/>
<dbReference type="eggNOG" id="KOG2865">
    <property type="taxonomic scope" value="Eukaryota"/>
</dbReference>
<dbReference type="GeneTree" id="ENSGT00390000006865"/>
<dbReference type="HOGENOM" id="CLU_007383_6_4_1"/>
<dbReference type="InParanoid" id="Q9DC69"/>
<dbReference type="OMA" id="PEDQFTN"/>
<dbReference type="OrthoDB" id="275457at2759"/>
<dbReference type="PhylomeDB" id="Q9DC69"/>
<dbReference type="TreeFam" id="TF105961"/>
<dbReference type="Reactome" id="R-MMU-611105">
    <property type="pathway name" value="Respiratory electron transport"/>
</dbReference>
<dbReference type="Reactome" id="R-MMU-6799198">
    <property type="pathway name" value="Complex I biogenesis"/>
</dbReference>
<dbReference type="BioGRID-ORCS" id="66108">
    <property type="hits" value="14 hits in 78 CRISPR screens"/>
</dbReference>
<dbReference type="CD-CODE" id="CE726F99">
    <property type="entry name" value="Postsynaptic density"/>
</dbReference>
<dbReference type="ChiTaRS" id="Ndufa9">
    <property type="organism name" value="mouse"/>
</dbReference>
<dbReference type="PRO" id="PR:Q9DC69"/>
<dbReference type="Proteomes" id="UP000000589">
    <property type="component" value="Chromosome 6"/>
</dbReference>
<dbReference type="RNAct" id="Q9DC69">
    <property type="molecule type" value="protein"/>
</dbReference>
<dbReference type="Bgee" id="ENSMUSG00000000399">
    <property type="expression patterns" value="Expressed in interventricular septum and 277 other cell types or tissues"/>
</dbReference>
<dbReference type="ExpressionAtlas" id="Q9DC69">
    <property type="expression patterns" value="baseline and differential"/>
</dbReference>
<dbReference type="GO" id="GO:0005743">
    <property type="term" value="C:mitochondrial inner membrane"/>
    <property type="evidence" value="ECO:0000314"/>
    <property type="project" value="UniProtKB"/>
</dbReference>
<dbReference type="GO" id="GO:0005759">
    <property type="term" value="C:mitochondrial matrix"/>
    <property type="evidence" value="ECO:0007669"/>
    <property type="project" value="UniProtKB-SubCell"/>
</dbReference>
<dbReference type="GO" id="GO:0005739">
    <property type="term" value="C:mitochondrion"/>
    <property type="evidence" value="ECO:0000314"/>
    <property type="project" value="MGI"/>
</dbReference>
<dbReference type="GO" id="GO:0045271">
    <property type="term" value="C:respiratory chain complex I"/>
    <property type="evidence" value="ECO:0000314"/>
    <property type="project" value="UniProtKB"/>
</dbReference>
<dbReference type="GO" id="GO:0003954">
    <property type="term" value="F:NADH dehydrogenase activity"/>
    <property type="evidence" value="ECO:0007669"/>
    <property type="project" value="Ensembl"/>
</dbReference>
<dbReference type="GO" id="GO:0044877">
    <property type="term" value="F:protein-containing complex binding"/>
    <property type="evidence" value="ECO:0000266"/>
    <property type="project" value="MGI"/>
</dbReference>
<dbReference type="GO" id="GO:0009060">
    <property type="term" value="P:aerobic respiration"/>
    <property type="evidence" value="ECO:0000303"/>
    <property type="project" value="ComplexPortal"/>
</dbReference>
<dbReference type="GO" id="GO:0007623">
    <property type="term" value="P:circadian rhythm"/>
    <property type="evidence" value="ECO:0000250"/>
    <property type="project" value="UniProtKB"/>
</dbReference>
<dbReference type="GO" id="GO:0042776">
    <property type="term" value="P:proton motive force-driven mitochondrial ATP synthesis"/>
    <property type="evidence" value="ECO:0000303"/>
    <property type="project" value="ComplexPortal"/>
</dbReference>
<dbReference type="CDD" id="cd05271">
    <property type="entry name" value="NDUFA9_like_SDR_a"/>
    <property type="match status" value="1"/>
</dbReference>
<dbReference type="FunFam" id="3.40.50.720:FF:000246">
    <property type="entry name" value="NADH dehydrogenase [ubiquinone] 1 alpha subcomplex subunit 9, mitochondrial"/>
    <property type="match status" value="1"/>
</dbReference>
<dbReference type="Gene3D" id="3.40.50.720">
    <property type="entry name" value="NAD(P)-binding Rossmann-like Domain"/>
    <property type="match status" value="1"/>
</dbReference>
<dbReference type="InterPro" id="IPR051207">
    <property type="entry name" value="ComplexI_NDUFA9_subunit"/>
</dbReference>
<dbReference type="InterPro" id="IPR036291">
    <property type="entry name" value="NAD(P)-bd_dom_sf"/>
</dbReference>
<dbReference type="InterPro" id="IPR008030">
    <property type="entry name" value="NmrA-like"/>
</dbReference>
<dbReference type="PANTHER" id="PTHR12126:SF11">
    <property type="entry name" value="NADH DEHYDROGENASE [UBIQUINONE] 1 ALPHA SUBCOMPLEX SUBUNIT 9, MITOCHONDRIAL"/>
    <property type="match status" value="1"/>
</dbReference>
<dbReference type="PANTHER" id="PTHR12126">
    <property type="entry name" value="NADH-UBIQUINONE OXIDOREDUCTASE 39 KDA SUBUNIT-RELATED"/>
    <property type="match status" value="1"/>
</dbReference>
<dbReference type="Pfam" id="PF05368">
    <property type="entry name" value="NmrA"/>
    <property type="match status" value="1"/>
</dbReference>
<dbReference type="SUPFAM" id="SSF51735">
    <property type="entry name" value="NAD(P)-binding Rossmann-fold domains"/>
    <property type="match status" value="1"/>
</dbReference>
<gene>
    <name type="primary">Ndufa9</name>
</gene>
<keyword id="KW-0002">3D-structure</keyword>
<keyword id="KW-0007">Acetylation</keyword>
<keyword id="KW-0903">Direct protein sequencing</keyword>
<keyword id="KW-0249">Electron transport</keyword>
<keyword id="KW-0274">FAD</keyword>
<keyword id="KW-0285">Flavoprotein</keyword>
<keyword id="KW-0496">Mitochondrion</keyword>
<keyword id="KW-1185">Reference proteome</keyword>
<keyword id="KW-0679">Respiratory chain</keyword>
<keyword id="KW-0809">Transit peptide</keyword>
<keyword id="KW-0813">Transport</keyword>
<accession>Q9DC69</accession>
<accession>Q6GTD3</accession>
<accession>Q99JP9</accession>
<name>NDUA9_MOUSE</name>
<sequence>MAAAVRFRVVRALPMSRPAITAAATSVFCGSSHRQLHHAVIPHGKGGRSSVSGVVATVFGATGFLGRYVVNHLGRMGSQVIIPYRCDVYDIMHLRLMGDLGQLTFLEWDARDKDSIRKAVQHSNVVINLIGREWETRNFDFEDVFVNIPRAIAQASKEAGVERFIHVSHLNASMKSSSKSLRSKAVGEKEVRSVFPEAIIIRPSDIFGREDRFLNHFANYRWFLAVPLVSLGFKTVKQPVYVADVSKGIVNATKDPDAVGKTFAFTGPNRYLLFHLVKYIFGMTHRTFIPYPLPLFVYSWIGKLFGLSPFEPWTTKDKVERIHISDVMPTDLPGLEDLGVQPTPLELKSIEVLRRHRTYRWLSSEIEETKPAKTVNY</sequence>
<reference key="1">
    <citation type="journal article" date="2005" name="Science">
        <title>The transcriptional landscape of the mammalian genome.</title>
        <authorList>
            <person name="Carninci P."/>
            <person name="Kasukawa T."/>
            <person name="Katayama S."/>
            <person name="Gough J."/>
            <person name="Frith M.C."/>
            <person name="Maeda N."/>
            <person name="Oyama R."/>
            <person name="Ravasi T."/>
            <person name="Lenhard B."/>
            <person name="Wells C."/>
            <person name="Kodzius R."/>
            <person name="Shimokawa K."/>
            <person name="Bajic V.B."/>
            <person name="Brenner S.E."/>
            <person name="Batalov S."/>
            <person name="Forrest A.R."/>
            <person name="Zavolan M."/>
            <person name="Davis M.J."/>
            <person name="Wilming L.G."/>
            <person name="Aidinis V."/>
            <person name="Allen J.E."/>
            <person name="Ambesi-Impiombato A."/>
            <person name="Apweiler R."/>
            <person name="Aturaliya R.N."/>
            <person name="Bailey T.L."/>
            <person name="Bansal M."/>
            <person name="Baxter L."/>
            <person name="Beisel K.W."/>
            <person name="Bersano T."/>
            <person name="Bono H."/>
            <person name="Chalk A.M."/>
            <person name="Chiu K.P."/>
            <person name="Choudhary V."/>
            <person name="Christoffels A."/>
            <person name="Clutterbuck D.R."/>
            <person name="Crowe M.L."/>
            <person name="Dalla E."/>
            <person name="Dalrymple B.P."/>
            <person name="de Bono B."/>
            <person name="Della Gatta G."/>
            <person name="di Bernardo D."/>
            <person name="Down T."/>
            <person name="Engstrom P."/>
            <person name="Fagiolini M."/>
            <person name="Faulkner G."/>
            <person name="Fletcher C.F."/>
            <person name="Fukushima T."/>
            <person name="Furuno M."/>
            <person name="Futaki S."/>
            <person name="Gariboldi M."/>
            <person name="Georgii-Hemming P."/>
            <person name="Gingeras T.R."/>
            <person name="Gojobori T."/>
            <person name="Green R.E."/>
            <person name="Gustincich S."/>
            <person name="Harbers M."/>
            <person name="Hayashi Y."/>
            <person name="Hensch T.K."/>
            <person name="Hirokawa N."/>
            <person name="Hill D."/>
            <person name="Huminiecki L."/>
            <person name="Iacono M."/>
            <person name="Ikeo K."/>
            <person name="Iwama A."/>
            <person name="Ishikawa T."/>
            <person name="Jakt M."/>
            <person name="Kanapin A."/>
            <person name="Katoh M."/>
            <person name="Kawasawa Y."/>
            <person name="Kelso J."/>
            <person name="Kitamura H."/>
            <person name="Kitano H."/>
            <person name="Kollias G."/>
            <person name="Krishnan S.P."/>
            <person name="Kruger A."/>
            <person name="Kummerfeld S.K."/>
            <person name="Kurochkin I.V."/>
            <person name="Lareau L.F."/>
            <person name="Lazarevic D."/>
            <person name="Lipovich L."/>
            <person name="Liu J."/>
            <person name="Liuni S."/>
            <person name="McWilliam S."/>
            <person name="Madan Babu M."/>
            <person name="Madera M."/>
            <person name="Marchionni L."/>
            <person name="Matsuda H."/>
            <person name="Matsuzawa S."/>
            <person name="Miki H."/>
            <person name="Mignone F."/>
            <person name="Miyake S."/>
            <person name="Morris K."/>
            <person name="Mottagui-Tabar S."/>
            <person name="Mulder N."/>
            <person name="Nakano N."/>
            <person name="Nakauchi H."/>
            <person name="Ng P."/>
            <person name="Nilsson R."/>
            <person name="Nishiguchi S."/>
            <person name="Nishikawa S."/>
            <person name="Nori F."/>
            <person name="Ohara O."/>
            <person name="Okazaki Y."/>
            <person name="Orlando V."/>
            <person name="Pang K.C."/>
            <person name="Pavan W.J."/>
            <person name="Pavesi G."/>
            <person name="Pesole G."/>
            <person name="Petrovsky N."/>
            <person name="Piazza S."/>
            <person name="Reed J."/>
            <person name="Reid J.F."/>
            <person name="Ring B.Z."/>
            <person name="Ringwald M."/>
            <person name="Rost B."/>
            <person name="Ruan Y."/>
            <person name="Salzberg S.L."/>
            <person name="Sandelin A."/>
            <person name="Schneider C."/>
            <person name="Schoenbach C."/>
            <person name="Sekiguchi K."/>
            <person name="Semple C.A."/>
            <person name="Seno S."/>
            <person name="Sessa L."/>
            <person name="Sheng Y."/>
            <person name="Shibata Y."/>
            <person name="Shimada H."/>
            <person name="Shimada K."/>
            <person name="Silva D."/>
            <person name="Sinclair B."/>
            <person name="Sperling S."/>
            <person name="Stupka E."/>
            <person name="Sugiura K."/>
            <person name="Sultana R."/>
            <person name="Takenaka Y."/>
            <person name="Taki K."/>
            <person name="Tammoja K."/>
            <person name="Tan S.L."/>
            <person name="Tang S."/>
            <person name="Taylor M.S."/>
            <person name="Tegner J."/>
            <person name="Teichmann S.A."/>
            <person name="Ueda H.R."/>
            <person name="van Nimwegen E."/>
            <person name="Verardo R."/>
            <person name="Wei C.L."/>
            <person name="Yagi K."/>
            <person name="Yamanishi H."/>
            <person name="Zabarovsky E."/>
            <person name="Zhu S."/>
            <person name="Zimmer A."/>
            <person name="Hide W."/>
            <person name="Bult C."/>
            <person name="Grimmond S.M."/>
            <person name="Teasdale R.D."/>
            <person name="Liu E.T."/>
            <person name="Brusic V."/>
            <person name="Quackenbush J."/>
            <person name="Wahlestedt C."/>
            <person name="Mattick J.S."/>
            <person name="Hume D.A."/>
            <person name="Kai C."/>
            <person name="Sasaki D."/>
            <person name="Tomaru Y."/>
            <person name="Fukuda S."/>
            <person name="Kanamori-Katayama M."/>
            <person name="Suzuki M."/>
            <person name="Aoki J."/>
            <person name="Arakawa T."/>
            <person name="Iida J."/>
            <person name="Imamura K."/>
            <person name="Itoh M."/>
            <person name="Kato T."/>
            <person name="Kawaji H."/>
            <person name="Kawagashira N."/>
            <person name="Kawashima T."/>
            <person name="Kojima M."/>
            <person name="Kondo S."/>
            <person name="Konno H."/>
            <person name="Nakano K."/>
            <person name="Ninomiya N."/>
            <person name="Nishio T."/>
            <person name="Okada M."/>
            <person name="Plessy C."/>
            <person name="Shibata K."/>
            <person name="Shiraki T."/>
            <person name="Suzuki S."/>
            <person name="Tagami M."/>
            <person name="Waki K."/>
            <person name="Watahiki A."/>
            <person name="Okamura-Oho Y."/>
            <person name="Suzuki H."/>
            <person name="Kawai J."/>
            <person name="Hayashizaki Y."/>
        </authorList>
    </citation>
    <scope>NUCLEOTIDE SEQUENCE [LARGE SCALE MRNA]</scope>
    <source>
        <strain>C57BL/6J</strain>
        <tissue>Heart</tissue>
    </source>
</reference>
<reference key="2">
    <citation type="submission" date="2005-07" db="EMBL/GenBank/DDBJ databases">
        <authorList>
            <person name="Mural R.J."/>
            <person name="Adams M.D."/>
            <person name="Myers E.W."/>
            <person name="Smith H.O."/>
            <person name="Venter J.C."/>
        </authorList>
    </citation>
    <scope>NUCLEOTIDE SEQUENCE [LARGE SCALE GENOMIC DNA]</scope>
</reference>
<reference key="3">
    <citation type="journal article" date="2004" name="Genome Res.">
        <title>The status, quality, and expansion of the NIH full-length cDNA project: the Mammalian Gene Collection (MGC).</title>
        <authorList>
            <consortium name="The MGC Project Team"/>
        </authorList>
    </citation>
    <scope>NUCLEOTIDE SEQUENCE [LARGE SCALE MRNA]</scope>
    <source>
        <strain>C57BL/6J</strain>
        <tissue>Brain</tissue>
    </source>
</reference>
<reference key="4">
    <citation type="submission" date="2007-04" db="UniProtKB">
        <authorList>
            <person name="Lubec G."/>
            <person name="Kang S.U."/>
        </authorList>
    </citation>
    <scope>PROTEIN SEQUENCE OF 76-95; 118-132; 164-175; 193-209; 213-221; 238-286 AND 304-316</scope>
    <scope>IDENTIFICATION BY MASS SPECTROMETRY</scope>
    <source>
        <strain>C57BL/6J</strain>
        <tissue>Brain</tissue>
    </source>
</reference>
<reference key="5">
    <citation type="journal article" date="2010" name="Cell">
        <title>A tissue-specific atlas of mouse protein phosphorylation and expression.</title>
        <authorList>
            <person name="Huttlin E.L."/>
            <person name="Jedrychowski M.P."/>
            <person name="Elias J.E."/>
            <person name="Goswami T."/>
            <person name="Rad R."/>
            <person name="Beausoleil S.A."/>
            <person name="Villen J."/>
            <person name="Haas W."/>
            <person name="Sowa M.E."/>
            <person name="Gygi S.P."/>
        </authorList>
    </citation>
    <scope>IDENTIFICATION BY MASS SPECTROMETRY [LARGE SCALE ANALYSIS]</scope>
    <source>
        <tissue>Brain</tissue>
        <tissue>Brown adipose tissue</tissue>
        <tissue>Heart</tissue>
        <tissue>Kidney</tissue>
        <tissue>Liver</tissue>
        <tissue>Lung</tissue>
        <tissue>Pancreas</tissue>
        <tissue>Spleen</tissue>
        <tissue>Testis</tissue>
    </source>
</reference>
<reference key="6">
    <citation type="journal article" date="2013" name="Mol. Cell">
        <title>SIRT5-mediated lysine desuccinylation impacts diverse metabolic pathways.</title>
        <authorList>
            <person name="Park J."/>
            <person name="Chen Y."/>
            <person name="Tishkoff D.X."/>
            <person name="Peng C."/>
            <person name="Tan M."/>
            <person name="Dai L."/>
            <person name="Xie Z."/>
            <person name="Zhang Y."/>
            <person name="Zwaans B.M."/>
            <person name="Skinner M.E."/>
            <person name="Lombard D.B."/>
            <person name="Zhao Y."/>
        </authorList>
    </citation>
    <scope>SUCCINYLATION [LARGE SCALE ANALYSIS] AT LYS-175</scope>
    <scope>IDENTIFICATION BY MASS SPECTROMETRY [LARGE SCALE ANALYSIS]</scope>
    <source>
        <tissue>Liver</tissue>
    </source>
</reference>
<reference key="7">
    <citation type="journal article" date="2013" name="Proc. Natl. Acad. Sci. U.S.A.">
        <title>Label-free quantitative proteomics of the lysine acetylome in mitochondria identifies substrates of SIRT3 in metabolic pathways.</title>
        <authorList>
            <person name="Rardin M.J."/>
            <person name="Newman J.C."/>
            <person name="Held J.M."/>
            <person name="Cusack M.P."/>
            <person name="Sorensen D.J."/>
            <person name="Li B."/>
            <person name="Schilling B."/>
            <person name="Mooney S.D."/>
            <person name="Kahn C.R."/>
            <person name="Verdin E."/>
            <person name="Gibson B.W."/>
        </authorList>
    </citation>
    <scope>ACETYLATION [LARGE SCALE ANALYSIS] AT LYS-189 AND LYS-370</scope>
    <scope>IDENTIFICATION BY MASS SPECTROMETRY [LARGE SCALE ANALYSIS]</scope>
    <source>
        <tissue>Liver</tissue>
    </source>
</reference>
<reference key="8">
    <citation type="journal article" date="2019" name="IScience">
        <title>Rewiring of the Human Mitochondrial Interactome during Neuronal Reprogramming Reveals Regulators of the Respirasome and Neurogenesis.</title>
        <authorList>
            <person name="Moutaoufik M.T."/>
            <person name="Malty R."/>
            <person name="Amin S."/>
            <person name="Zhang Q."/>
            <person name="Phanse S."/>
            <person name="Gagarinova A."/>
            <person name="Zilocchi M."/>
            <person name="Hoell L."/>
            <person name="Minic Z."/>
            <person name="Gagarinova M."/>
            <person name="Aoki H."/>
            <person name="Stockwell J."/>
            <person name="Jessulat M."/>
            <person name="Goebels F."/>
            <person name="Broderick K."/>
            <person name="Scott N.E."/>
            <person name="Vlasblom J."/>
            <person name="Musso G."/>
            <person name="Prasad B."/>
            <person name="Lamantea E."/>
            <person name="Garavaglia B."/>
            <person name="Rajput A."/>
            <person name="Murayama K."/>
            <person name="Okazaki Y."/>
            <person name="Foster L.J."/>
            <person name="Bader G.D."/>
            <person name="Cayabyab F.S."/>
            <person name="Babu M."/>
        </authorList>
    </citation>
    <scope>INTERACTION WITH RAB5IF</scope>
</reference>
<reference evidence="7" key="9">
    <citation type="journal article" date="2024" name="Nat. Struct. Mol. Biol.">
        <title>SCAF1 drives the compositional diversity of mammalian respirasomes.</title>
        <authorList>
            <person name="Vercellino I."/>
            <person name="Sazanov L.A."/>
        </authorList>
    </citation>
    <scope>STRUCTURE BY ELECTRON MICROSCOPY (3.60 ANGSTROMS) IN COMPLEX WITH MITOCHONDRIAL RESPIRATORY SUPERCOMPLEX</scope>
    <scope>FUNCTION</scope>
    <scope>SUBCELLULAR LOCATION</scope>
    <scope>SUBUNIT</scope>
</reference>